<comment type="function">
    <text evidence="1">Catalyzes the condensation of carbamoyl phosphate and aspartate to form carbamoyl aspartate and inorganic phosphate, the committed step in the de novo pyrimidine nucleotide biosynthesis pathway.</text>
</comment>
<comment type="catalytic activity">
    <reaction evidence="1">
        <text>carbamoyl phosphate + L-aspartate = N-carbamoyl-L-aspartate + phosphate + H(+)</text>
        <dbReference type="Rhea" id="RHEA:20013"/>
        <dbReference type="ChEBI" id="CHEBI:15378"/>
        <dbReference type="ChEBI" id="CHEBI:29991"/>
        <dbReference type="ChEBI" id="CHEBI:32814"/>
        <dbReference type="ChEBI" id="CHEBI:43474"/>
        <dbReference type="ChEBI" id="CHEBI:58228"/>
        <dbReference type="EC" id="2.1.3.2"/>
    </reaction>
</comment>
<comment type="pathway">
    <text evidence="1">Pyrimidine metabolism; UMP biosynthesis via de novo pathway; (S)-dihydroorotate from bicarbonate: step 2/3.</text>
</comment>
<comment type="subunit">
    <text evidence="1">Heterododecamer (2C3:3R2) of six catalytic PyrB chains organized as two trimers (C3), and six regulatory PyrI chains organized as three dimers (R2).</text>
</comment>
<comment type="similarity">
    <text evidence="1">Belongs to the aspartate/ornithine carbamoyltransferase superfamily. ATCase family.</text>
</comment>
<proteinExistence type="inferred from homology"/>
<gene>
    <name evidence="1" type="primary">pyrB</name>
    <name type="ordered locus">CHAB381_0964</name>
</gene>
<reference key="1">
    <citation type="submission" date="2007-07" db="EMBL/GenBank/DDBJ databases">
        <title>Complete genome sequence of Campylobacter hominis ATCC BAA-381, a commensal isolated from the human gastrointestinal tract.</title>
        <authorList>
            <person name="Fouts D.E."/>
            <person name="Mongodin E.F."/>
            <person name="Puiu D."/>
            <person name="Sebastian Y."/>
            <person name="Miller W.G."/>
            <person name="Mandrell R.E."/>
            <person name="Nelson K.E."/>
        </authorList>
    </citation>
    <scope>NUCLEOTIDE SEQUENCE [LARGE SCALE GENOMIC DNA]</scope>
    <source>
        <strain>ATCC BAA-381 / DSM 21671 / CCUG 45161 / LMG 19568 / NCTC 13146 / CH001A</strain>
    </source>
</reference>
<sequence>MPYTKKDLISMKDLSKDDIFDILRLALKFKELNKSPVKKADSLRGKTVINAFFENSTRTRTSFEIAAKRLGADAINFSSSVSSTKKGESLIDTIKNMEAMKTDIFVVRHASSGTAKFIADNASASVVNAGDGLNEHPTQCLLDLLTIYENKGRLENLNVAIIGDIFRSRVARSNVWAMKTLGINVKLFGPPMMTRDCEAFGVPLCSNIDEAVENSDVIIMLRIQLERQDGEPEFPSVREYSKFFGLTAKRMELAKKDVIIMHPGPINRGVEINSDVADDPKFTKILNQVENGVAVRMAVLDTLIKNRS</sequence>
<dbReference type="EC" id="2.1.3.2" evidence="1"/>
<dbReference type="EMBL" id="CP000776">
    <property type="protein sequence ID" value="ABS51403.1"/>
    <property type="molecule type" value="Genomic_DNA"/>
</dbReference>
<dbReference type="RefSeq" id="WP_012108818.1">
    <property type="nucleotide sequence ID" value="NC_009714.1"/>
</dbReference>
<dbReference type="SMR" id="A7I1Y4"/>
<dbReference type="STRING" id="360107.CHAB381_0964"/>
<dbReference type="KEGG" id="cha:CHAB381_0964"/>
<dbReference type="eggNOG" id="COG0540">
    <property type="taxonomic scope" value="Bacteria"/>
</dbReference>
<dbReference type="HOGENOM" id="CLU_043846_2_0_7"/>
<dbReference type="OrthoDB" id="9774690at2"/>
<dbReference type="UniPathway" id="UPA00070">
    <property type="reaction ID" value="UER00116"/>
</dbReference>
<dbReference type="Proteomes" id="UP000002407">
    <property type="component" value="Chromosome"/>
</dbReference>
<dbReference type="GO" id="GO:0005829">
    <property type="term" value="C:cytosol"/>
    <property type="evidence" value="ECO:0007669"/>
    <property type="project" value="TreeGrafter"/>
</dbReference>
<dbReference type="GO" id="GO:0016597">
    <property type="term" value="F:amino acid binding"/>
    <property type="evidence" value="ECO:0007669"/>
    <property type="project" value="InterPro"/>
</dbReference>
<dbReference type="GO" id="GO:0004070">
    <property type="term" value="F:aspartate carbamoyltransferase activity"/>
    <property type="evidence" value="ECO:0007669"/>
    <property type="project" value="UniProtKB-UniRule"/>
</dbReference>
<dbReference type="GO" id="GO:0006207">
    <property type="term" value="P:'de novo' pyrimidine nucleobase biosynthetic process"/>
    <property type="evidence" value="ECO:0007669"/>
    <property type="project" value="InterPro"/>
</dbReference>
<dbReference type="GO" id="GO:0044205">
    <property type="term" value="P:'de novo' UMP biosynthetic process"/>
    <property type="evidence" value="ECO:0007669"/>
    <property type="project" value="UniProtKB-UniRule"/>
</dbReference>
<dbReference type="GO" id="GO:0006520">
    <property type="term" value="P:amino acid metabolic process"/>
    <property type="evidence" value="ECO:0007669"/>
    <property type="project" value="InterPro"/>
</dbReference>
<dbReference type="Gene3D" id="3.40.50.1370">
    <property type="entry name" value="Aspartate/ornithine carbamoyltransferase"/>
    <property type="match status" value="2"/>
</dbReference>
<dbReference type="HAMAP" id="MF_00001">
    <property type="entry name" value="Asp_carb_tr"/>
    <property type="match status" value="1"/>
</dbReference>
<dbReference type="InterPro" id="IPR006132">
    <property type="entry name" value="Asp/Orn_carbamoyltranf_P-bd"/>
</dbReference>
<dbReference type="InterPro" id="IPR006130">
    <property type="entry name" value="Asp/Orn_carbamoylTrfase"/>
</dbReference>
<dbReference type="InterPro" id="IPR036901">
    <property type="entry name" value="Asp/Orn_carbamoylTrfase_sf"/>
</dbReference>
<dbReference type="InterPro" id="IPR002082">
    <property type="entry name" value="Asp_carbamoyltransf"/>
</dbReference>
<dbReference type="InterPro" id="IPR006131">
    <property type="entry name" value="Asp_carbamoyltransf_Asp/Orn-bd"/>
</dbReference>
<dbReference type="NCBIfam" id="TIGR00670">
    <property type="entry name" value="asp_carb_tr"/>
    <property type="match status" value="1"/>
</dbReference>
<dbReference type="NCBIfam" id="NF002032">
    <property type="entry name" value="PRK00856.1"/>
    <property type="match status" value="1"/>
</dbReference>
<dbReference type="PANTHER" id="PTHR45753:SF6">
    <property type="entry name" value="ASPARTATE CARBAMOYLTRANSFERASE"/>
    <property type="match status" value="1"/>
</dbReference>
<dbReference type="PANTHER" id="PTHR45753">
    <property type="entry name" value="ORNITHINE CARBAMOYLTRANSFERASE, MITOCHONDRIAL"/>
    <property type="match status" value="1"/>
</dbReference>
<dbReference type="Pfam" id="PF00185">
    <property type="entry name" value="OTCace"/>
    <property type="match status" value="1"/>
</dbReference>
<dbReference type="Pfam" id="PF02729">
    <property type="entry name" value="OTCace_N"/>
    <property type="match status" value="1"/>
</dbReference>
<dbReference type="PRINTS" id="PR00100">
    <property type="entry name" value="AOTCASE"/>
</dbReference>
<dbReference type="PRINTS" id="PR00101">
    <property type="entry name" value="ATCASE"/>
</dbReference>
<dbReference type="SUPFAM" id="SSF53671">
    <property type="entry name" value="Aspartate/ornithine carbamoyltransferase"/>
    <property type="match status" value="1"/>
</dbReference>
<dbReference type="PROSITE" id="PS00097">
    <property type="entry name" value="CARBAMOYLTRANSFERASE"/>
    <property type="match status" value="1"/>
</dbReference>
<accession>A7I1Y4</accession>
<name>PYRB_CAMHC</name>
<protein>
    <recommendedName>
        <fullName evidence="1">Aspartate carbamoyltransferase catalytic subunit</fullName>
        <ecNumber evidence="1">2.1.3.2</ecNumber>
    </recommendedName>
    <alternativeName>
        <fullName evidence="1">Aspartate transcarbamylase</fullName>
        <shortName evidence="1">ATCase</shortName>
    </alternativeName>
</protein>
<feature type="chain" id="PRO_0000321086" description="Aspartate carbamoyltransferase catalytic subunit">
    <location>
        <begin position="1"/>
        <end position="308"/>
    </location>
</feature>
<feature type="binding site" evidence="1">
    <location>
        <position position="58"/>
    </location>
    <ligand>
        <name>carbamoyl phosphate</name>
        <dbReference type="ChEBI" id="CHEBI:58228"/>
    </ligand>
</feature>
<feature type="binding site" evidence="1">
    <location>
        <position position="59"/>
    </location>
    <ligand>
        <name>carbamoyl phosphate</name>
        <dbReference type="ChEBI" id="CHEBI:58228"/>
    </ligand>
</feature>
<feature type="binding site" evidence="1">
    <location>
        <position position="86"/>
    </location>
    <ligand>
        <name>L-aspartate</name>
        <dbReference type="ChEBI" id="CHEBI:29991"/>
    </ligand>
</feature>
<feature type="binding site" evidence="1">
    <location>
        <position position="108"/>
    </location>
    <ligand>
        <name>carbamoyl phosphate</name>
        <dbReference type="ChEBI" id="CHEBI:58228"/>
    </ligand>
</feature>
<feature type="binding site" evidence="1">
    <location>
        <position position="136"/>
    </location>
    <ligand>
        <name>carbamoyl phosphate</name>
        <dbReference type="ChEBI" id="CHEBI:58228"/>
    </ligand>
</feature>
<feature type="binding site" evidence="1">
    <location>
        <position position="139"/>
    </location>
    <ligand>
        <name>carbamoyl phosphate</name>
        <dbReference type="ChEBI" id="CHEBI:58228"/>
    </ligand>
</feature>
<feature type="binding site" evidence="1">
    <location>
        <position position="169"/>
    </location>
    <ligand>
        <name>L-aspartate</name>
        <dbReference type="ChEBI" id="CHEBI:29991"/>
    </ligand>
</feature>
<feature type="binding site" evidence="1">
    <location>
        <position position="222"/>
    </location>
    <ligand>
        <name>L-aspartate</name>
        <dbReference type="ChEBI" id="CHEBI:29991"/>
    </ligand>
</feature>
<feature type="binding site" evidence="1">
    <location>
        <position position="264"/>
    </location>
    <ligand>
        <name>carbamoyl phosphate</name>
        <dbReference type="ChEBI" id="CHEBI:58228"/>
    </ligand>
</feature>
<feature type="binding site" evidence="1">
    <location>
        <position position="265"/>
    </location>
    <ligand>
        <name>carbamoyl phosphate</name>
        <dbReference type="ChEBI" id="CHEBI:58228"/>
    </ligand>
</feature>
<organism>
    <name type="scientific">Campylobacter hominis (strain ATCC BAA-381 / DSM 21671 / CCUG 45161 / LMG 19568 / NCTC 13146 / CH001A)</name>
    <dbReference type="NCBI Taxonomy" id="360107"/>
    <lineage>
        <taxon>Bacteria</taxon>
        <taxon>Pseudomonadati</taxon>
        <taxon>Campylobacterota</taxon>
        <taxon>Epsilonproteobacteria</taxon>
        <taxon>Campylobacterales</taxon>
        <taxon>Campylobacteraceae</taxon>
        <taxon>Campylobacter</taxon>
    </lineage>
</organism>
<keyword id="KW-0665">Pyrimidine biosynthesis</keyword>
<keyword id="KW-1185">Reference proteome</keyword>
<keyword id="KW-0808">Transferase</keyword>
<evidence type="ECO:0000255" key="1">
    <source>
        <dbReference type="HAMAP-Rule" id="MF_00001"/>
    </source>
</evidence>